<dbReference type="EC" id="6.3.4.3" evidence="1"/>
<dbReference type="EMBL" id="CP000444">
    <property type="protein sequence ID" value="ABI44450.1"/>
    <property type="molecule type" value="Genomic_DNA"/>
</dbReference>
<dbReference type="SMR" id="Q0HR05"/>
<dbReference type="KEGG" id="shm:Shewmr7_3469"/>
<dbReference type="HOGENOM" id="CLU_003601_3_3_6"/>
<dbReference type="UniPathway" id="UPA00193"/>
<dbReference type="GO" id="GO:0005524">
    <property type="term" value="F:ATP binding"/>
    <property type="evidence" value="ECO:0007669"/>
    <property type="project" value="UniProtKB-UniRule"/>
</dbReference>
<dbReference type="GO" id="GO:0004329">
    <property type="term" value="F:formate-tetrahydrofolate ligase activity"/>
    <property type="evidence" value="ECO:0007669"/>
    <property type="project" value="UniProtKB-UniRule"/>
</dbReference>
<dbReference type="GO" id="GO:0035999">
    <property type="term" value="P:tetrahydrofolate interconversion"/>
    <property type="evidence" value="ECO:0007669"/>
    <property type="project" value="UniProtKB-UniRule"/>
</dbReference>
<dbReference type="FunFam" id="3.10.410.10:FF:000001">
    <property type="entry name" value="Putative formate--tetrahydrofolate ligase"/>
    <property type="match status" value="1"/>
</dbReference>
<dbReference type="Gene3D" id="3.30.1510.10">
    <property type="entry name" value="Domain 2, N(10)-formyltetrahydrofolate synthetase"/>
    <property type="match status" value="1"/>
</dbReference>
<dbReference type="Gene3D" id="3.10.410.10">
    <property type="entry name" value="Formyltetrahydrofolate synthetase, domain 3"/>
    <property type="match status" value="1"/>
</dbReference>
<dbReference type="Gene3D" id="3.40.50.300">
    <property type="entry name" value="P-loop containing nucleotide triphosphate hydrolases"/>
    <property type="match status" value="1"/>
</dbReference>
<dbReference type="HAMAP" id="MF_01543">
    <property type="entry name" value="FTHFS"/>
    <property type="match status" value="1"/>
</dbReference>
<dbReference type="InterPro" id="IPR000559">
    <property type="entry name" value="Formate_THF_ligase"/>
</dbReference>
<dbReference type="InterPro" id="IPR020628">
    <property type="entry name" value="Formate_THF_ligase_CS"/>
</dbReference>
<dbReference type="InterPro" id="IPR027417">
    <property type="entry name" value="P-loop_NTPase"/>
</dbReference>
<dbReference type="NCBIfam" id="NF010030">
    <property type="entry name" value="PRK13505.1"/>
    <property type="match status" value="1"/>
</dbReference>
<dbReference type="NCBIfam" id="NF010031">
    <property type="entry name" value="PRK13506.1"/>
    <property type="match status" value="1"/>
</dbReference>
<dbReference type="Pfam" id="PF01268">
    <property type="entry name" value="FTHFS"/>
    <property type="match status" value="1"/>
</dbReference>
<dbReference type="SUPFAM" id="SSF52540">
    <property type="entry name" value="P-loop containing nucleoside triphosphate hydrolases"/>
    <property type="match status" value="1"/>
</dbReference>
<dbReference type="PROSITE" id="PS00721">
    <property type="entry name" value="FTHFS_1"/>
    <property type="match status" value="1"/>
</dbReference>
<feature type="chain" id="PRO_0000300540" description="Formate--tetrahydrofolate ligase">
    <location>
        <begin position="1"/>
        <end position="569"/>
    </location>
</feature>
<feature type="binding site" evidence="1">
    <location>
        <begin position="64"/>
        <end position="71"/>
    </location>
    <ligand>
        <name>ATP</name>
        <dbReference type="ChEBI" id="CHEBI:30616"/>
    </ligand>
</feature>
<organism>
    <name type="scientific">Shewanella sp. (strain MR-7)</name>
    <dbReference type="NCBI Taxonomy" id="60481"/>
    <lineage>
        <taxon>Bacteria</taxon>
        <taxon>Pseudomonadati</taxon>
        <taxon>Pseudomonadota</taxon>
        <taxon>Gammaproteobacteria</taxon>
        <taxon>Alteromonadales</taxon>
        <taxon>Shewanellaceae</taxon>
        <taxon>Shewanella</taxon>
    </lineage>
</organism>
<evidence type="ECO:0000255" key="1">
    <source>
        <dbReference type="HAMAP-Rule" id="MF_01543"/>
    </source>
</evidence>
<comment type="catalytic activity">
    <reaction evidence="1">
        <text>(6S)-5,6,7,8-tetrahydrofolate + formate + ATP = (6R)-10-formyltetrahydrofolate + ADP + phosphate</text>
        <dbReference type="Rhea" id="RHEA:20221"/>
        <dbReference type="ChEBI" id="CHEBI:15740"/>
        <dbReference type="ChEBI" id="CHEBI:30616"/>
        <dbReference type="ChEBI" id="CHEBI:43474"/>
        <dbReference type="ChEBI" id="CHEBI:57453"/>
        <dbReference type="ChEBI" id="CHEBI:195366"/>
        <dbReference type="ChEBI" id="CHEBI:456216"/>
        <dbReference type="EC" id="6.3.4.3"/>
    </reaction>
</comment>
<comment type="pathway">
    <text evidence="1">One-carbon metabolism; tetrahydrofolate interconversion.</text>
</comment>
<comment type="similarity">
    <text evidence="1">Belongs to the formate--tetrahydrofolate ligase family.</text>
</comment>
<sequence>MLTDMDISRRADLKDIAALGAEFGLLPDEMQLFGKTKAKVDLRVQQRLAEQQGKLIIVTAVTPTPHGEGKTVTTIGLTQSLKALGNKVCACIRQPSMGPVFGVKGGAAGGGYAQVVPMQELNLHLTGDIHAVSSAHNLGAAAIASRLYHETRLGKAEFELQSGQNYLDIAPNGIRWHRVVDHNDRCLREIEVGLGENNGPAYTSGFDITAASELMAILALSRNLADMRARIGKLVLAVNRQGAAISAEDLGVAGAMTALMADAVKPTLMQTLNGAPCLIHAGPFANIAHGNSSVIADDIALKLADFVVTEGGFGSDMGFEKFCNIKARQSGLAPSTAVLVTTLKALKANSGLTSDADINAPDQARLEAGFANLNWHINNVARYGIPVVVAINRFATDTDAELNWLIEAVSGTAAFGCELSETFSQGEAGALALAQTVMRACEQPSEFTLLYPDDMALEAKLSTLAEVGYGAAGVSLSEAAKLQLQELSALGYAHLPVCMAKTPLSISHDPQLKGVPQGFIVPVRELVLNAGAGFITALVGNVMTMPGLGLVPGYLKIDIGADGEITGLG</sequence>
<name>FTHS_SHESR</name>
<proteinExistence type="inferred from homology"/>
<keyword id="KW-0067">ATP-binding</keyword>
<keyword id="KW-0436">Ligase</keyword>
<keyword id="KW-0547">Nucleotide-binding</keyword>
<keyword id="KW-0554">One-carbon metabolism</keyword>
<protein>
    <recommendedName>
        <fullName evidence="1">Formate--tetrahydrofolate ligase</fullName>
        <ecNumber evidence="1">6.3.4.3</ecNumber>
    </recommendedName>
    <alternativeName>
        <fullName evidence="1">Formyltetrahydrofolate synthetase</fullName>
        <shortName evidence="1">FHS</shortName>
        <shortName evidence="1">FTHFS</shortName>
    </alternativeName>
</protein>
<gene>
    <name evidence="1" type="primary">fhs</name>
    <name type="ordered locus">Shewmr7_3469</name>
</gene>
<accession>Q0HR05</accession>
<reference key="1">
    <citation type="submission" date="2006-08" db="EMBL/GenBank/DDBJ databases">
        <title>Complete sequence of chromosome 1 of Shewanella sp. MR-7.</title>
        <authorList>
            <person name="Copeland A."/>
            <person name="Lucas S."/>
            <person name="Lapidus A."/>
            <person name="Barry K."/>
            <person name="Detter J.C."/>
            <person name="Glavina del Rio T."/>
            <person name="Hammon N."/>
            <person name="Israni S."/>
            <person name="Dalin E."/>
            <person name="Tice H."/>
            <person name="Pitluck S."/>
            <person name="Kiss H."/>
            <person name="Brettin T."/>
            <person name="Bruce D."/>
            <person name="Han C."/>
            <person name="Tapia R."/>
            <person name="Gilna P."/>
            <person name="Schmutz J."/>
            <person name="Larimer F."/>
            <person name="Land M."/>
            <person name="Hauser L."/>
            <person name="Kyrpides N."/>
            <person name="Mikhailova N."/>
            <person name="Nealson K."/>
            <person name="Konstantinidis K."/>
            <person name="Klappenbach J."/>
            <person name="Tiedje J."/>
            <person name="Richardson P."/>
        </authorList>
    </citation>
    <scope>NUCLEOTIDE SEQUENCE [LARGE SCALE GENOMIC DNA]</scope>
    <source>
        <strain>MR-7</strain>
    </source>
</reference>